<accession>Q4K8C3</accession>
<proteinExistence type="inferred from homology"/>
<protein>
    <recommendedName>
        <fullName evidence="1">Adenosylcobinamide-GDP ribazoletransferase</fullName>
        <ecNumber evidence="1">2.7.8.26</ecNumber>
    </recommendedName>
    <alternativeName>
        <fullName evidence="1">Cobalamin synthase</fullName>
    </alternativeName>
    <alternativeName>
        <fullName evidence="1">Cobalamin-5'-phosphate synthase</fullName>
    </alternativeName>
</protein>
<reference key="1">
    <citation type="journal article" date="2005" name="Nat. Biotechnol.">
        <title>Complete genome sequence of the plant commensal Pseudomonas fluorescens Pf-5.</title>
        <authorList>
            <person name="Paulsen I.T."/>
            <person name="Press C.M."/>
            <person name="Ravel J."/>
            <person name="Kobayashi D.Y."/>
            <person name="Myers G.S.A."/>
            <person name="Mavrodi D.V."/>
            <person name="DeBoy R.T."/>
            <person name="Seshadri R."/>
            <person name="Ren Q."/>
            <person name="Madupu R."/>
            <person name="Dodson R.J."/>
            <person name="Durkin A.S."/>
            <person name="Brinkac L.M."/>
            <person name="Daugherty S.C."/>
            <person name="Sullivan S.A."/>
            <person name="Rosovitz M.J."/>
            <person name="Gwinn M.L."/>
            <person name="Zhou L."/>
            <person name="Schneider D.J."/>
            <person name="Cartinhour S.W."/>
            <person name="Nelson W.C."/>
            <person name="Weidman J."/>
            <person name="Watkins K."/>
            <person name="Tran K."/>
            <person name="Khouri H."/>
            <person name="Pierson E.A."/>
            <person name="Pierson L.S. III"/>
            <person name="Thomashow L.S."/>
            <person name="Loper J.E."/>
        </authorList>
    </citation>
    <scope>NUCLEOTIDE SEQUENCE [LARGE SCALE GENOMIC DNA]</scope>
    <source>
        <strain>ATCC BAA-477 / NRRL B-23932 / Pf-5</strain>
    </source>
</reference>
<name>COBS_PSEF5</name>
<gene>
    <name evidence="1" type="primary">cobS</name>
    <name type="ordered locus">PFL_4422</name>
</gene>
<dbReference type="EC" id="2.7.8.26" evidence="1"/>
<dbReference type="EMBL" id="CP000076">
    <property type="protein sequence ID" value="AAY93673.1"/>
    <property type="molecule type" value="Genomic_DNA"/>
</dbReference>
<dbReference type="RefSeq" id="WP_011062686.1">
    <property type="nucleotide sequence ID" value="NC_004129.6"/>
</dbReference>
<dbReference type="STRING" id="220664.PFL_4422"/>
<dbReference type="KEGG" id="pfl:PFL_4422"/>
<dbReference type="PATRIC" id="fig|220664.5.peg.4527"/>
<dbReference type="eggNOG" id="COG0368">
    <property type="taxonomic scope" value="Bacteria"/>
</dbReference>
<dbReference type="HOGENOM" id="CLU_057426_3_1_6"/>
<dbReference type="UniPathway" id="UPA00148">
    <property type="reaction ID" value="UER00238"/>
</dbReference>
<dbReference type="Proteomes" id="UP000008540">
    <property type="component" value="Chromosome"/>
</dbReference>
<dbReference type="GO" id="GO:0005886">
    <property type="term" value="C:plasma membrane"/>
    <property type="evidence" value="ECO:0007669"/>
    <property type="project" value="UniProtKB-SubCell"/>
</dbReference>
<dbReference type="GO" id="GO:0051073">
    <property type="term" value="F:adenosylcobinamide-GDP ribazoletransferase activity"/>
    <property type="evidence" value="ECO:0007669"/>
    <property type="project" value="UniProtKB-UniRule"/>
</dbReference>
<dbReference type="GO" id="GO:0008818">
    <property type="term" value="F:cobalamin 5'-phosphate synthase activity"/>
    <property type="evidence" value="ECO:0007669"/>
    <property type="project" value="UniProtKB-UniRule"/>
</dbReference>
<dbReference type="GO" id="GO:0009236">
    <property type="term" value="P:cobalamin biosynthetic process"/>
    <property type="evidence" value="ECO:0007669"/>
    <property type="project" value="UniProtKB-UniRule"/>
</dbReference>
<dbReference type="HAMAP" id="MF_00719">
    <property type="entry name" value="CobS"/>
    <property type="match status" value="1"/>
</dbReference>
<dbReference type="InterPro" id="IPR003805">
    <property type="entry name" value="CobS"/>
</dbReference>
<dbReference type="NCBIfam" id="TIGR00317">
    <property type="entry name" value="cobS"/>
    <property type="match status" value="1"/>
</dbReference>
<dbReference type="NCBIfam" id="NF001278">
    <property type="entry name" value="PRK00235.1-5"/>
    <property type="match status" value="1"/>
</dbReference>
<dbReference type="PANTHER" id="PTHR34148">
    <property type="entry name" value="ADENOSYLCOBINAMIDE-GDP RIBAZOLETRANSFERASE"/>
    <property type="match status" value="1"/>
</dbReference>
<dbReference type="PANTHER" id="PTHR34148:SF1">
    <property type="entry name" value="ADENOSYLCOBINAMIDE-GDP RIBAZOLETRANSFERASE"/>
    <property type="match status" value="1"/>
</dbReference>
<dbReference type="Pfam" id="PF02654">
    <property type="entry name" value="CobS"/>
    <property type="match status" value="1"/>
</dbReference>
<sequence length="243" mass="25865">MLPFWIALQFLSSLPVRLPGMPRPEELGRSLLFYPLVGLLFGVLLWVLNAMLGGVPLLLHAALLLTAWVLLSGGLHLDGLADSADAWLGGFGDRERTLSIMKDPRSGPIAVVTLVLVLLLKFTALVALIEQQQGFALLLAPLIGRGALLGLFLCTPYVRAGGLGQALADHLPRVAGRQVLGLSVLACLLLGGYSGLWAVLLATVLFFWLRQVMMRRLGGTTGDTAGAVLELLETAVLLGVALF</sequence>
<keyword id="KW-0997">Cell inner membrane</keyword>
<keyword id="KW-1003">Cell membrane</keyword>
<keyword id="KW-0169">Cobalamin biosynthesis</keyword>
<keyword id="KW-0460">Magnesium</keyword>
<keyword id="KW-0472">Membrane</keyword>
<keyword id="KW-0808">Transferase</keyword>
<keyword id="KW-0812">Transmembrane</keyword>
<keyword id="KW-1133">Transmembrane helix</keyword>
<feature type="chain" id="PRO_1000045791" description="Adenosylcobinamide-GDP ribazoletransferase">
    <location>
        <begin position="1"/>
        <end position="243"/>
    </location>
</feature>
<feature type="transmembrane region" description="Helical" evidence="1">
    <location>
        <begin position="31"/>
        <end position="48"/>
    </location>
</feature>
<feature type="transmembrane region" description="Helical" evidence="1">
    <location>
        <begin position="61"/>
        <end position="81"/>
    </location>
</feature>
<feature type="transmembrane region" description="Helical" evidence="1">
    <location>
        <begin position="109"/>
        <end position="129"/>
    </location>
</feature>
<feature type="transmembrane region" description="Helical" evidence="1">
    <location>
        <begin position="134"/>
        <end position="154"/>
    </location>
</feature>
<feature type="transmembrane region" description="Helical" evidence="1">
    <location>
        <begin position="188"/>
        <end position="208"/>
    </location>
</feature>
<organism>
    <name type="scientific">Pseudomonas fluorescens (strain ATCC BAA-477 / NRRL B-23932 / Pf-5)</name>
    <dbReference type="NCBI Taxonomy" id="220664"/>
    <lineage>
        <taxon>Bacteria</taxon>
        <taxon>Pseudomonadati</taxon>
        <taxon>Pseudomonadota</taxon>
        <taxon>Gammaproteobacteria</taxon>
        <taxon>Pseudomonadales</taxon>
        <taxon>Pseudomonadaceae</taxon>
        <taxon>Pseudomonas</taxon>
    </lineage>
</organism>
<comment type="function">
    <text evidence="1">Joins adenosylcobinamide-GDP and alpha-ribazole to generate adenosylcobalamin (Ado-cobalamin). Also synthesizes adenosylcobalamin 5'-phosphate from adenosylcobinamide-GDP and alpha-ribazole 5'-phosphate.</text>
</comment>
<comment type="catalytic activity">
    <reaction evidence="1">
        <text>alpha-ribazole + adenosylcob(III)inamide-GDP = adenosylcob(III)alamin + GMP + H(+)</text>
        <dbReference type="Rhea" id="RHEA:16049"/>
        <dbReference type="ChEBI" id="CHEBI:10329"/>
        <dbReference type="ChEBI" id="CHEBI:15378"/>
        <dbReference type="ChEBI" id="CHEBI:18408"/>
        <dbReference type="ChEBI" id="CHEBI:58115"/>
        <dbReference type="ChEBI" id="CHEBI:60487"/>
        <dbReference type="EC" id="2.7.8.26"/>
    </reaction>
</comment>
<comment type="catalytic activity">
    <reaction evidence="1">
        <text>alpha-ribazole 5'-phosphate + adenosylcob(III)inamide-GDP = adenosylcob(III)alamin 5'-phosphate + GMP + H(+)</text>
        <dbReference type="Rhea" id="RHEA:23560"/>
        <dbReference type="ChEBI" id="CHEBI:15378"/>
        <dbReference type="ChEBI" id="CHEBI:57918"/>
        <dbReference type="ChEBI" id="CHEBI:58115"/>
        <dbReference type="ChEBI" id="CHEBI:60487"/>
        <dbReference type="ChEBI" id="CHEBI:60493"/>
        <dbReference type="EC" id="2.7.8.26"/>
    </reaction>
</comment>
<comment type="cofactor">
    <cofactor evidence="1">
        <name>Mg(2+)</name>
        <dbReference type="ChEBI" id="CHEBI:18420"/>
    </cofactor>
</comment>
<comment type="pathway">
    <text evidence="1">Cofactor biosynthesis; adenosylcobalamin biosynthesis; adenosylcobalamin from cob(II)yrinate a,c-diamide: step 7/7.</text>
</comment>
<comment type="subcellular location">
    <subcellularLocation>
        <location evidence="1">Cell inner membrane</location>
        <topology evidence="1">Multi-pass membrane protein</topology>
    </subcellularLocation>
</comment>
<comment type="similarity">
    <text evidence="1">Belongs to the CobS family.</text>
</comment>
<evidence type="ECO:0000255" key="1">
    <source>
        <dbReference type="HAMAP-Rule" id="MF_00719"/>
    </source>
</evidence>